<dbReference type="EC" id="2.1.1.199" evidence="1"/>
<dbReference type="EMBL" id="CP001145">
    <property type="protein sequence ID" value="ACI17823.1"/>
    <property type="molecule type" value="Genomic_DNA"/>
</dbReference>
<dbReference type="RefSeq" id="WP_012544475.1">
    <property type="nucleotide sequence ID" value="NC_011295.1"/>
</dbReference>
<dbReference type="SMR" id="B5Y8C1"/>
<dbReference type="STRING" id="309798.COPRO5265_0670"/>
<dbReference type="KEGG" id="cpo:COPRO5265_0670"/>
<dbReference type="eggNOG" id="COG0275">
    <property type="taxonomic scope" value="Bacteria"/>
</dbReference>
<dbReference type="HOGENOM" id="CLU_038422_2_0_9"/>
<dbReference type="OrthoDB" id="9806637at2"/>
<dbReference type="Proteomes" id="UP000001732">
    <property type="component" value="Chromosome"/>
</dbReference>
<dbReference type="GO" id="GO:0005737">
    <property type="term" value="C:cytoplasm"/>
    <property type="evidence" value="ECO:0007669"/>
    <property type="project" value="UniProtKB-SubCell"/>
</dbReference>
<dbReference type="GO" id="GO:0071424">
    <property type="term" value="F:rRNA (cytosine-N4-)-methyltransferase activity"/>
    <property type="evidence" value="ECO:0007669"/>
    <property type="project" value="UniProtKB-UniRule"/>
</dbReference>
<dbReference type="GO" id="GO:0070475">
    <property type="term" value="P:rRNA base methylation"/>
    <property type="evidence" value="ECO:0007669"/>
    <property type="project" value="UniProtKB-UniRule"/>
</dbReference>
<dbReference type="CDD" id="cd02440">
    <property type="entry name" value="AdoMet_MTases"/>
    <property type="match status" value="1"/>
</dbReference>
<dbReference type="FunFam" id="1.10.150.170:FF:000003">
    <property type="entry name" value="Ribosomal RNA small subunit methyltransferase H"/>
    <property type="match status" value="1"/>
</dbReference>
<dbReference type="Gene3D" id="1.10.150.170">
    <property type="entry name" value="Putative methyltransferase TM0872, insert domain"/>
    <property type="match status" value="1"/>
</dbReference>
<dbReference type="Gene3D" id="3.40.50.150">
    <property type="entry name" value="Vaccinia Virus protein VP39"/>
    <property type="match status" value="1"/>
</dbReference>
<dbReference type="HAMAP" id="MF_01007">
    <property type="entry name" value="16SrRNA_methyltr_H"/>
    <property type="match status" value="1"/>
</dbReference>
<dbReference type="InterPro" id="IPR002903">
    <property type="entry name" value="RsmH"/>
</dbReference>
<dbReference type="InterPro" id="IPR023397">
    <property type="entry name" value="SAM-dep_MeTrfase_MraW_recog"/>
</dbReference>
<dbReference type="InterPro" id="IPR029063">
    <property type="entry name" value="SAM-dependent_MTases_sf"/>
</dbReference>
<dbReference type="NCBIfam" id="TIGR00006">
    <property type="entry name" value="16S rRNA (cytosine(1402)-N(4))-methyltransferase RsmH"/>
    <property type="match status" value="1"/>
</dbReference>
<dbReference type="PANTHER" id="PTHR11265:SF0">
    <property type="entry name" value="12S RRNA N4-METHYLCYTIDINE METHYLTRANSFERASE"/>
    <property type="match status" value="1"/>
</dbReference>
<dbReference type="PANTHER" id="PTHR11265">
    <property type="entry name" value="S-ADENOSYL-METHYLTRANSFERASE MRAW"/>
    <property type="match status" value="1"/>
</dbReference>
<dbReference type="Pfam" id="PF01795">
    <property type="entry name" value="Methyltransf_5"/>
    <property type="match status" value="1"/>
</dbReference>
<dbReference type="PIRSF" id="PIRSF004486">
    <property type="entry name" value="MraW"/>
    <property type="match status" value="1"/>
</dbReference>
<dbReference type="SUPFAM" id="SSF81799">
    <property type="entry name" value="Putative methyltransferase TM0872, insert domain"/>
    <property type="match status" value="1"/>
</dbReference>
<dbReference type="SUPFAM" id="SSF53335">
    <property type="entry name" value="S-adenosyl-L-methionine-dependent methyltransferases"/>
    <property type="match status" value="1"/>
</dbReference>
<keyword id="KW-0963">Cytoplasm</keyword>
<keyword id="KW-0489">Methyltransferase</keyword>
<keyword id="KW-1185">Reference proteome</keyword>
<keyword id="KW-0698">rRNA processing</keyword>
<keyword id="KW-0949">S-adenosyl-L-methionine</keyword>
<keyword id="KW-0808">Transferase</keyword>
<proteinExistence type="inferred from homology"/>
<evidence type="ECO:0000255" key="1">
    <source>
        <dbReference type="HAMAP-Rule" id="MF_01007"/>
    </source>
</evidence>
<feature type="chain" id="PRO_0000386826" description="Ribosomal RNA small subunit methyltransferase H">
    <location>
        <begin position="1"/>
        <end position="299"/>
    </location>
</feature>
<feature type="binding site" evidence="1">
    <location>
        <begin position="35"/>
        <end position="37"/>
    </location>
    <ligand>
        <name>S-adenosyl-L-methionine</name>
        <dbReference type="ChEBI" id="CHEBI:59789"/>
    </ligand>
</feature>
<feature type="binding site" evidence="1">
    <location>
        <position position="54"/>
    </location>
    <ligand>
        <name>S-adenosyl-L-methionine</name>
        <dbReference type="ChEBI" id="CHEBI:59789"/>
    </ligand>
</feature>
<feature type="binding site" evidence="1">
    <location>
        <position position="80"/>
    </location>
    <ligand>
        <name>S-adenosyl-L-methionine</name>
        <dbReference type="ChEBI" id="CHEBI:59789"/>
    </ligand>
</feature>
<feature type="binding site" evidence="1">
    <location>
        <position position="101"/>
    </location>
    <ligand>
        <name>S-adenosyl-L-methionine</name>
        <dbReference type="ChEBI" id="CHEBI:59789"/>
    </ligand>
</feature>
<feature type="binding site" evidence="1">
    <location>
        <position position="108"/>
    </location>
    <ligand>
        <name>S-adenosyl-L-methionine</name>
        <dbReference type="ChEBI" id="CHEBI:59789"/>
    </ligand>
</feature>
<comment type="function">
    <text evidence="1">Specifically methylates the N4 position of cytidine in position 1402 (C1402) of 16S rRNA.</text>
</comment>
<comment type="catalytic activity">
    <reaction evidence="1">
        <text>cytidine(1402) in 16S rRNA + S-adenosyl-L-methionine = N(4)-methylcytidine(1402) in 16S rRNA + S-adenosyl-L-homocysteine + H(+)</text>
        <dbReference type="Rhea" id="RHEA:42928"/>
        <dbReference type="Rhea" id="RHEA-COMP:10286"/>
        <dbReference type="Rhea" id="RHEA-COMP:10287"/>
        <dbReference type="ChEBI" id="CHEBI:15378"/>
        <dbReference type="ChEBI" id="CHEBI:57856"/>
        <dbReference type="ChEBI" id="CHEBI:59789"/>
        <dbReference type="ChEBI" id="CHEBI:74506"/>
        <dbReference type="ChEBI" id="CHEBI:82748"/>
        <dbReference type="EC" id="2.1.1.199"/>
    </reaction>
</comment>
<comment type="subcellular location">
    <subcellularLocation>
        <location evidence="1">Cytoplasm</location>
    </subcellularLocation>
</comment>
<comment type="similarity">
    <text evidence="1">Belongs to the methyltransferase superfamily. RsmH family.</text>
</comment>
<protein>
    <recommendedName>
        <fullName evidence="1">Ribosomal RNA small subunit methyltransferase H</fullName>
        <ecNumber evidence="1">2.1.1.199</ecNumber>
    </recommendedName>
    <alternativeName>
        <fullName evidence="1">16S rRNA m(4)C1402 methyltransferase</fullName>
    </alternativeName>
    <alternativeName>
        <fullName evidence="1">rRNA (cytosine-N(4)-)-methyltransferase RsmH</fullName>
    </alternativeName>
</protein>
<reference key="1">
    <citation type="submission" date="2008-08" db="EMBL/GenBank/DDBJ databases">
        <title>The complete genome sequence of Coprothermobacter proteolyticus strain ATCC 5245 / DSM 5265 / BT.</title>
        <authorList>
            <person name="Dodson R.J."/>
            <person name="Durkin A.S."/>
            <person name="Wu M."/>
            <person name="Eisen J."/>
            <person name="Sutton G."/>
        </authorList>
    </citation>
    <scope>NUCLEOTIDE SEQUENCE [LARGE SCALE GENOMIC DNA]</scope>
    <source>
        <strain>ATCC 35245 / DSM 5265 / OCM 4 / BT</strain>
    </source>
</reference>
<gene>
    <name evidence="1" type="primary">rsmH</name>
    <name type="synonym">mraW</name>
    <name type="ordered locus">COPRO5265_0670</name>
</gene>
<organism>
    <name type="scientific">Coprothermobacter proteolyticus (strain ATCC 35245 / DSM 5265 / OCM 4 / BT)</name>
    <dbReference type="NCBI Taxonomy" id="309798"/>
    <lineage>
        <taxon>Bacteria</taxon>
        <taxon>Pseudomonadati</taxon>
        <taxon>Coprothermobacterota</taxon>
        <taxon>Coprothermobacteria</taxon>
        <taxon>Coprothermobacterales</taxon>
        <taxon>Coprothermobacteraceae</taxon>
        <taxon>Coprothermobacter</taxon>
    </lineage>
</organism>
<sequence>MTNYIEHKPVMAKQVAELLVSNEEGIYVDATAGSGGHLGLLANTYPEASFIGIDIDPEAVKFLTEKFAGVSNVRIIRGNYADLPDILHSMEIGQVDGILLDLGISMHQALSAQRGFSIKNPGPLDMRFSIDQKVTAYELVNSLSEEQLADIIYRYGEERRARKIAKAVVEARKVKPLETTDELADLVARTVGYRGRIHPATRVFQALRIATNRELDNLQVALPRIFQVLKEGGRLAVISYHSLEDRIVKQFFKTWEEEGKGLRLTKKVVKPSLEEINENPSSRSAKLRVFKKGVGGNEN</sequence>
<accession>B5Y8C1</accession>
<name>RSMH_COPPD</name>